<keyword id="KW-1003">Cell membrane</keyword>
<keyword id="KW-0449">Lipoprotein</keyword>
<keyword id="KW-0472">Membrane</keyword>
<keyword id="KW-0564">Palmitate</keyword>
<keyword id="KW-1185">Reference proteome</keyword>
<keyword id="KW-0732">Signal</keyword>
<feature type="signal peptide" evidence="1">
    <location>
        <begin position="1"/>
        <end position="20"/>
    </location>
</feature>
<feature type="chain" id="PRO_0000018233" description="Putative lipoprotein SCO4650">
    <location>
        <begin position="21"/>
        <end position="285"/>
    </location>
</feature>
<feature type="region of interest" description="Disordered" evidence="2">
    <location>
        <begin position="27"/>
        <end position="63"/>
    </location>
</feature>
<feature type="compositionally biased region" description="Low complexity" evidence="2">
    <location>
        <begin position="43"/>
        <end position="58"/>
    </location>
</feature>
<feature type="lipid moiety-binding region" description="N-palmitoyl cysteine" evidence="1">
    <location>
        <position position="21"/>
    </location>
</feature>
<feature type="lipid moiety-binding region" description="S-diacylglycerol cysteine" evidence="1">
    <location>
        <position position="21"/>
    </location>
</feature>
<accession>P41108</accession>
<accession>Q9L0L1</accession>
<reference key="1">
    <citation type="journal article" date="2002" name="Nature">
        <title>Complete genome sequence of the model actinomycete Streptomyces coelicolor A3(2).</title>
        <authorList>
            <person name="Bentley S.D."/>
            <person name="Chater K.F."/>
            <person name="Cerdeno-Tarraga A.-M."/>
            <person name="Challis G.L."/>
            <person name="Thomson N.R."/>
            <person name="James K.D."/>
            <person name="Harris D.E."/>
            <person name="Quail M.A."/>
            <person name="Kieser H."/>
            <person name="Harper D."/>
            <person name="Bateman A."/>
            <person name="Brown S."/>
            <person name="Chandra G."/>
            <person name="Chen C.W."/>
            <person name="Collins M."/>
            <person name="Cronin A."/>
            <person name="Fraser A."/>
            <person name="Goble A."/>
            <person name="Hidalgo J."/>
            <person name="Hornsby T."/>
            <person name="Howarth S."/>
            <person name="Huang C.-H."/>
            <person name="Kieser T."/>
            <person name="Larke L."/>
            <person name="Murphy L.D."/>
            <person name="Oliver K."/>
            <person name="O'Neil S."/>
            <person name="Rabbinowitsch E."/>
            <person name="Rajandream M.A."/>
            <person name="Rutherford K.M."/>
            <person name="Rutter S."/>
            <person name="Seeger K."/>
            <person name="Saunders D."/>
            <person name="Sharp S."/>
            <person name="Squares R."/>
            <person name="Squares S."/>
            <person name="Taylor K."/>
            <person name="Warren T."/>
            <person name="Wietzorrek A."/>
            <person name="Woodward J.R."/>
            <person name="Barrell B.G."/>
            <person name="Parkhill J."/>
            <person name="Hopwood D.A."/>
        </authorList>
    </citation>
    <scope>NUCLEOTIDE SEQUENCE [LARGE SCALE GENOMIC DNA]</scope>
    <source>
        <strain>ATCC BAA-471 / A3(2) / M145</strain>
    </source>
</reference>
<reference key="2">
    <citation type="journal article" date="1994" name="Mol. Microbiol.">
        <title>Synthesis of ribosomal proteins during growth of Streptomyces coelicolor.</title>
        <authorList>
            <person name="Blanco G."/>
            <person name="Rodicio R."/>
            <person name="Puglia A.M."/>
            <person name="Mendez C."/>
            <person name="Thompson C.J."/>
            <person name="Salas J.A."/>
        </authorList>
    </citation>
    <scope>NUCLEOTIDE SEQUENCE [GENOMIC DNA] OF 30-285</scope>
    <source>
        <strain>A3(2) / NRRL B-16638</strain>
    </source>
</reference>
<comment type="subcellular location">
    <subcellularLocation>
        <location evidence="3">Cell membrane</location>
        <topology evidence="3">Lipid-anchor</topology>
    </subcellularLocation>
</comment>
<evidence type="ECO:0000255" key="1">
    <source>
        <dbReference type="PROSITE-ProRule" id="PRU00303"/>
    </source>
</evidence>
<evidence type="ECO:0000256" key="2">
    <source>
        <dbReference type="SAM" id="MobiDB-lite"/>
    </source>
</evidence>
<evidence type="ECO:0000305" key="3"/>
<name>Y4650_STRCO</name>
<sequence length="285" mass="29906">MTGTTARRTVVSVAVSAALACVTACTGPGGSDDAGHSTGPTGSARPSASAPASSRAPALTGPSADALRKVERATGRAGSARVESTTVMGRELSLEAAGALGWDDGLTGTLTITYTGGTTAETMRRLGTTAMEARYLPDAYYARMGDEFAERVGGRHWIKYVYEDLEDLGGGAGAGFADQMRNTTPNQAVKLLLSAQDVRRVGEETTRGRRTTHWSGTMGGATAQSVDIWVDDRDLLVKKVERGRTETGELTQTAYYSDYGVRVLAERPPAADTADFKELLASQGS</sequence>
<proteinExistence type="inferred from homology"/>
<protein>
    <recommendedName>
        <fullName>Putative lipoprotein SCO4650</fullName>
    </recommendedName>
</protein>
<organism>
    <name type="scientific">Streptomyces coelicolor (strain ATCC BAA-471 / A3(2) / M145)</name>
    <dbReference type="NCBI Taxonomy" id="100226"/>
    <lineage>
        <taxon>Bacteria</taxon>
        <taxon>Bacillati</taxon>
        <taxon>Actinomycetota</taxon>
        <taxon>Actinomycetes</taxon>
        <taxon>Kitasatosporales</taxon>
        <taxon>Streptomycetaceae</taxon>
        <taxon>Streptomyces</taxon>
        <taxon>Streptomyces albidoflavus group</taxon>
    </lineage>
</organism>
<gene>
    <name type="ordered locus">SCO4650</name>
    <name type="ORF">SCD82.21</name>
</gene>
<dbReference type="EMBL" id="AL939120">
    <property type="protein sequence ID" value="CAB77424.1"/>
    <property type="molecule type" value="Genomic_DNA"/>
</dbReference>
<dbReference type="EMBL" id="L24552">
    <property type="protein sequence ID" value="AAC36894.1"/>
    <property type="molecule type" value="Genomic_DNA"/>
</dbReference>
<dbReference type="PIR" id="S49534">
    <property type="entry name" value="S49534"/>
</dbReference>
<dbReference type="RefSeq" id="NP_628811.1">
    <property type="nucleotide sequence ID" value="NC_003888.3"/>
</dbReference>
<dbReference type="RefSeq" id="WP_003974313.1">
    <property type="nucleotide sequence ID" value="NZ_VNID01000028.1"/>
</dbReference>
<dbReference type="SMR" id="P41108"/>
<dbReference type="STRING" id="100226.gene:17762299"/>
<dbReference type="PaxDb" id="100226-SCO4650"/>
<dbReference type="KEGG" id="sco:SCO4650"/>
<dbReference type="PATRIC" id="fig|100226.15.peg.4721"/>
<dbReference type="eggNOG" id="ENOG50333DA">
    <property type="taxonomic scope" value="Bacteria"/>
</dbReference>
<dbReference type="HOGENOM" id="CLU_076599_0_0_11"/>
<dbReference type="InParanoid" id="P41108"/>
<dbReference type="OrthoDB" id="3369896at2"/>
<dbReference type="Proteomes" id="UP000001973">
    <property type="component" value="Chromosome"/>
</dbReference>
<dbReference type="GO" id="GO:0005886">
    <property type="term" value="C:plasma membrane"/>
    <property type="evidence" value="ECO:0007669"/>
    <property type="project" value="UniProtKB-SubCell"/>
</dbReference>
<dbReference type="Gene3D" id="2.50.20.20">
    <property type="match status" value="1"/>
</dbReference>
<dbReference type="InterPro" id="IPR029046">
    <property type="entry name" value="LolA/LolB/LppX"/>
</dbReference>
<dbReference type="SUPFAM" id="SSF89392">
    <property type="entry name" value="Prokaryotic lipoproteins and lipoprotein localization factors"/>
    <property type="match status" value="1"/>
</dbReference>
<dbReference type="PROSITE" id="PS51257">
    <property type="entry name" value="PROKAR_LIPOPROTEIN"/>
    <property type="match status" value="1"/>
</dbReference>